<name>RL4_SHEPA</name>
<sequence>MELVLKDAQSALEVSEATFGRDFNEALVHQVVVAYAANARQGTRAQKTRAEVTGSGKKPWRQKGTGRARAGTVKGPIWRGGGVTFAAKTQDHSQKVNKKMYRGALKSIFSELVRQDRLIVVESFGVEAPKTKELKAKLNEMQLEDVLIVTPEVDENLFLAARNLYKVDVRDVAGIDPVSLIAFNKVLVTAEAIKQIEEMLG</sequence>
<gene>
    <name evidence="1" type="primary">rplD</name>
    <name type="ordered locus">Spea_0185</name>
</gene>
<evidence type="ECO:0000255" key="1">
    <source>
        <dbReference type="HAMAP-Rule" id="MF_01328"/>
    </source>
</evidence>
<evidence type="ECO:0000256" key="2">
    <source>
        <dbReference type="SAM" id="MobiDB-lite"/>
    </source>
</evidence>
<evidence type="ECO:0000305" key="3"/>
<reference key="1">
    <citation type="submission" date="2007-10" db="EMBL/GenBank/DDBJ databases">
        <title>Complete sequence of Shewanella pealeana ATCC 700345.</title>
        <authorList>
            <consortium name="US DOE Joint Genome Institute"/>
            <person name="Copeland A."/>
            <person name="Lucas S."/>
            <person name="Lapidus A."/>
            <person name="Barry K."/>
            <person name="Glavina del Rio T."/>
            <person name="Dalin E."/>
            <person name="Tice H."/>
            <person name="Pitluck S."/>
            <person name="Chertkov O."/>
            <person name="Brettin T."/>
            <person name="Bruce D."/>
            <person name="Detter J.C."/>
            <person name="Han C."/>
            <person name="Schmutz J."/>
            <person name="Larimer F."/>
            <person name="Land M."/>
            <person name="Hauser L."/>
            <person name="Kyrpides N."/>
            <person name="Kim E."/>
            <person name="Zhao J.-S.Z."/>
            <person name="Manno D."/>
            <person name="Hawari J."/>
            <person name="Richardson P."/>
        </authorList>
    </citation>
    <scope>NUCLEOTIDE SEQUENCE [LARGE SCALE GENOMIC DNA]</scope>
    <source>
        <strain>ATCC 700345 / ANG-SQ1</strain>
    </source>
</reference>
<organism>
    <name type="scientific">Shewanella pealeana (strain ATCC 700345 / ANG-SQ1)</name>
    <dbReference type="NCBI Taxonomy" id="398579"/>
    <lineage>
        <taxon>Bacteria</taxon>
        <taxon>Pseudomonadati</taxon>
        <taxon>Pseudomonadota</taxon>
        <taxon>Gammaproteobacteria</taxon>
        <taxon>Alteromonadales</taxon>
        <taxon>Shewanellaceae</taxon>
        <taxon>Shewanella</taxon>
    </lineage>
</organism>
<proteinExistence type="inferred from homology"/>
<feature type="chain" id="PRO_1000086537" description="Large ribosomal subunit protein uL4">
    <location>
        <begin position="1"/>
        <end position="201"/>
    </location>
</feature>
<feature type="region of interest" description="Disordered" evidence="2">
    <location>
        <begin position="45"/>
        <end position="71"/>
    </location>
</feature>
<keyword id="KW-1185">Reference proteome</keyword>
<keyword id="KW-0687">Ribonucleoprotein</keyword>
<keyword id="KW-0689">Ribosomal protein</keyword>
<keyword id="KW-0694">RNA-binding</keyword>
<keyword id="KW-0699">rRNA-binding</keyword>
<accession>A8GYX7</accession>
<comment type="function">
    <text evidence="1">One of the primary rRNA binding proteins, this protein initially binds near the 5'-end of the 23S rRNA. It is important during the early stages of 50S assembly. It makes multiple contacts with different domains of the 23S rRNA in the assembled 50S subunit and ribosome.</text>
</comment>
<comment type="function">
    <text evidence="1">Forms part of the polypeptide exit tunnel.</text>
</comment>
<comment type="subunit">
    <text evidence="1">Part of the 50S ribosomal subunit.</text>
</comment>
<comment type="similarity">
    <text evidence="1">Belongs to the universal ribosomal protein uL4 family.</text>
</comment>
<protein>
    <recommendedName>
        <fullName evidence="1">Large ribosomal subunit protein uL4</fullName>
    </recommendedName>
    <alternativeName>
        <fullName evidence="3">50S ribosomal protein L4</fullName>
    </alternativeName>
</protein>
<dbReference type="EMBL" id="CP000851">
    <property type="protein sequence ID" value="ABV85514.1"/>
    <property type="molecule type" value="Genomic_DNA"/>
</dbReference>
<dbReference type="RefSeq" id="WP_012153458.1">
    <property type="nucleotide sequence ID" value="NC_009901.1"/>
</dbReference>
<dbReference type="SMR" id="A8GYX7"/>
<dbReference type="STRING" id="398579.Spea_0185"/>
<dbReference type="KEGG" id="spl:Spea_0185"/>
<dbReference type="eggNOG" id="COG0088">
    <property type="taxonomic scope" value="Bacteria"/>
</dbReference>
<dbReference type="HOGENOM" id="CLU_041575_5_2_6"/>
<dbReference type="OrthoDB" id="9803201at2"/>
<dbReference type="Proteomes" id="UP000002608">
    <property type="component" value="Chromosome"/>
</dbReference>
<dbReference type="GO" id="GO:1990904">
    <property type="term" value="C:ribonucleoprotein complex"/>
    <property type="evidence" value="ECO:0007669"/>
    <property type="project" value="UniProtKB-KW"/>
</dbReference>
<dbReference type="GO" id="GO:0005840">
    <property type="term" value="C:ribosome"/>
    <property type="evidence" value="ECO:0007669"/>
    <property type="project" value="UniProtKB-KW"/>
</dbReference>
<dbReference type="GO" id="GO:0019843">
    <property type="term" value="F:rRNA binding"/>
    <property type="evidence" value="ECO:0007669"/>
    <property type="project" value="UniProtKB-UniRule"/>
</dbReference>
<dbReference type="GO" id="GO:0003735">
    <property type="term" value="F:structural constituent of ribosome"/>
    <property type="evidence" value="ECO:0007669"/>
    <property type="project" value="InterPro"/>
</dbReference>
<dbReference type="GO" id="GO:0006412">
    <property type="term" value="P:translation"/>
    <property type="evidence" value="ECO:0007669"/>
    <property type="project" value="UniProtKB-UniRule"/>
</dbReference>
<dbReference type="FunFam" id="3.40.1370.10:FF:000001">
    <property type="entry name" value="50S ribosomal protein L4"/>
    <property type="match status" value="1"/>
</dbReference>
<dbReference type="Gene3D" id="3.40.1370.10">
    <property type="match status" value="1"/>
</dbReference>
<dbReference type="HAMAP" id="MF_01328_B">
    <property type="entry name" value="Ribosomal_uL4_B"/>
    <property type="match status" value="1"/>
</dbReference>
<dbReference type="InterPro" id="IPR002136">
    <property type="entry name" value="Ribosomal_uL4"/>
</dbReference>
<dbReference type="InterPro" id="IPR013005">
    <property type="entry name" value="Ribosomal_uL4-like"/>
</dbReference>
<dbReference type="InterPro" id="IPR023574">
    <property type="entry name" value="Ribosomal_uL4_dom_sf"/>
</dbReference>
<dbReference type="NCBIfam" id="TIGR03953">
    <property type="entry name" value="rplD_bact"/>
    <property type="match status" value="1"/>
</dbReference>
<dbReference type="PANTHER" id="PTHR10746">
    <property type="entry name" value="50S RIBOSOMAL PROTEIN L4"/>
    <property type="match status" value="1"/>
</dbReference>
<dbReference type="PANTHER" id="PTHR10746:SF6">
    <property type="entry name" value="LARGE RIBOSOMAL SUBUNIT PROTEIN UL4M"/>
    <property type="match status" value="1"/>
</dbReference>
<dbReference type="Pfam" id="PF00573">
    <property type="entry name" value="Ribosomal_L4"/>
    <property type="match status" value="1"/>
</dbReference>
<dbReference type="SUPFAM" id="SSF52166">
    <property type="entry name" value="Ribosomal protein L4"/>
    <property type="match status" value="1"/>
</dbReference>